<proteinExistence type="evidence at transcript level"/>
<feature type="transit peptide" description="Mitochondrion" evidence="1">
    <location>
        <begin position="1"/>
        <end position="8"/>
    </location>
</feature>
<feature type="chain" id="PRO_0000237334" description="Large ribosomal subunit protein bL17m">
    <location>
        <begin position="9"/>
        <end position="176"/>
    </location>
</feature>
<feature type="sequence conflict" description="In Ref. 2; AAG38872." evidence="3" ref="2">
    <original>M</original>
    <variation>I</variation>
    <location>
        <position position="75"/>
    </location>
</feature>
<feature type="sequence conflict" description="In Ref. 2; AAG38872." evidence="3" ref="2">
    <original>Q</original>
    <variation>PK</variation>
    <location>
        <position position="98"/>
    </location>
</feature>
<feature type="sequence conflict" description="In Ref. 2; AAG38872." evidence="3" ref="2">
    <original>G</original>
    <variation>C</variation>
    <location>
        <position position="102"/>
    </location>
</feature>
<name>RM17_RAT</name>
<evidence type="ECO:0000250" key="1">
    <source>
        <dbReference type="UniProtKB" id="Q3T0L3"/>
    </source>
</evidence>
<evidence type="ECO:0000250" key="2">
    <source>
        <dbReference type="UniProtKB" id="Q9NRX2"/>
    </source>
</evidence>
<evidence type="ECO:0000305" key="3"/>
<gene>
    <name type="primary">Mrpl17</name>
</gene>
<sequence length="176" mass="20264">MRLSLAAAISHGRVYRRLGLGPESRIHLLRNLLTGLVRHERIEATWARVDEMRGYAEKLIDYGKLGDTNERAMRMADFWLTEKDLIPKLFKVLAPRFQGQNGNYTRMLQIPNRKEQDRAKMAVIEYKGNCLPPLPLPHRDSNLTLLNQLLLGLQQDLHHNQKASLHSSHTVQTPKT</sequence>
<reference key="1">
    <citation type="journal article" date="2004" name="Genome Res.">
        <title>The status, quality, and expansion of the NIH full-length cDNA project: the Mammalian Gene Collection (MGC).</title>
        <authorList>
            <consortium name="The MGC Project Team"/>
        </authorList>
    </citation>
    <scope>NUCLEOTIDE SEQUENCE [LARGE SCALE MRNA]</scope>
    <source>
        <tissue>Pituitary</tissue>
    </source>
</reference>
<reference key="2">
    <citation type="submission" date="1996-04" db="EMBL/GenBank/DDBJ databases">
        <authorList>
            <person name="Michaelis M.L."/>
            <person name="Hadwiger G.H."/>
            <person name="Islam S.I."/>
            <person name="Kumar K.N."/>
        </authorList>
    </citation>
    <scope>NUCLEOTIDE SEQUENCE [MRNA] OF 10-176</scope>
</reference>
<keyword id="KW-0496">Mitochondrion</keyword>
<keyword id="KW-1185">Reference proteome</keyword>
<keyword id="KW-0687">Ribonucleoprotein</keyword>
<keyword id="KW-0689">Ribosomal protein</keyword>
<keyword id="KW-0809">Transit peptide</keyword>
<organism>
    <name type="scientific">Rattus norvegicus</name>
    <name type="common">Rat</name>
    <dbReference type="NCBI Taxonomy" id="10116"/>
    <lineage>
        <taxon>Eukaryota</taxon>
        <taxon>Metazoa</taxon>
        <taxon>Chordata</taxon>
        <taxon>Craniata</taxon>
        <taxon>Vertebrata</taxon>
        <taxon>Euteleostomi</taxon>
        <taxon>Mammalia</taxon>
        <taxon>Eutheria</taxon>
        <taxon>Euarchontoglires</taxon>
        <taxon>Glires</taxon>
        <taxon>Rodentia</taxon>
        <taxon>Myomorpha</taxon>
        <taxon>Muroidea</taxon>
        <taxon>Muridae</taxon>
        <taxon>Murinae</taxon>
        <taxon>Rattus</taxon>
    </lineage>
</organism>
<comment type="subunit">
    <text evidence="2">Component of the mitochondrial ribosome large subunit (39S) which comprises a 16S rRNA and about 50 distinct proteins.</text>
</comment>
<comment type="subcellular location">
    <subcellularLocation>
        <location evidence="2">Mitochondrion</location>
    </subcellularLocation>
</comment>
<comment type="similarity">
    <text evidence="3">Belongs to the bacterial ribosomal protein bL17 family.</text>
</comment>
<comment type="sequence caution" evidence="3">
    <conflict type="frameshift">
        <sequence resource="EMBL-CDS" id="AAG38872"/>
    </conflict>
</comment>
<dbReference type="EMBL" id="BC058447">
    <property type="protein sequence ID" value="AAH58447.1"/>
    <property type="molecule type" value="mRNA"/>
</dbReference>
<dbReference type="EMBL" id="U53512">
    <property type="protein sequence ID" value="AAG38872.1"/>
    <property type="status" value="ALT_FRAME"/>
    <property type="molecule type" value="mRNA"/>
</dbReference>
<dbReference type="RefSeq" id="NP_001300771.1">
    <property type="nucleotide sequence ID" value="NM_001313842.1"/>
</dbReference>
<dbReference type="RefSeq" id="NP_598223.2">
    <property type="nucleotide sequence ID" value="NM_133539.2"/>
</dbReference>
<dbReference type="SMR" id="Q6PDW6"/>
<dbReference type="FunCoup" id="Q6PDW6">
    <property type="interactions" value="2650"/>
</dbReference>
<dbReference type="STRING" id="10116.ENSRNOP00000045007"/>
<dbReference type="PhosphoSitePlus" id="Q6PDW6"/>
<dbReference type="PaxDb" id="10116-ENSRNOP00000045007"/>
<dbReference type="Ensembl" id="ENSRNOT00000050562.5">
    <property type="protein sequence ID" value="ENSRNOP00000045007.2"/>
    <property type="gene ID" value="ENSRNOG00000019497.8"/>
</dbReference>
<dbReference type="GeneID" id="171061"/>
<dbReference type="KEGG" id="rno:171061"/>
<dbReference type="UCSC" id="RGD:70943">
    <property type="organism name" value="rat"/>
</dbReference>
<dbReference type="AGR" id="RGD:70943"/>
<dbReference type="CTD" id="63875"/>
<dbReference type="RGD" id="70943">
    <property type="gene designation" value="Mrpl17"/>
</dbReference>
<dbReference type="eggNOG" id="KOG3280">
    <property type="taxonomic scope" value="Eukaryota"/>
</dbReference>
<dbReference type="GeneTree" id="ENSGT00390000010698"/>
<dbReference type="HOGENOM" id="CLU_074407_3_2_1"/>
<dbReference type="InParanoid" id="Q6PDW6"/>
<dbReference type="OMA" id="HKPTMEM"/>
<dbReference type="OrthoDB" id="275000at2759"/>
<dbReference type="PhylomeDB" id="Q6PDW6"/>
<dbReference type="TreeFam" id="TF105844"/>
<dbReference type="Reactome" id="R-RNO-5389840">
    <property type="pathway name" value="Mitochondrial translation elongation"/>
</dbReference>
<dbReference type="Reactome" id="R-RNO-5419276">
    <property type="pathway name" value="Mitochondrial translation termination"/>
</dbReference>
<dbReference type="PRO" id="PR:Q6PDW6"/>
<dbReference type="Proteomes" id="UP000002494">
    <property type="component" value="Chromosome 1"/>
</dbReference>
<dbReference type="Bgee" id="ENSRNOG00000019497">
    <property type="expression patterns" value="Expressed in ovary and 20 other cell types or tissues"/>
</dbReference>
<dbReference type="GO" id="GO:0005762">
    <property type="term" value="C:mitochondrial large ribosomal subunit"/>
    <property type="evidence" value="ECO:0000250"/>
    <property type="project" value="UniProtKB"/>
</dbReference>
<dbReference type="GO" id="GO:0005739">
    <property type="term" value="C:mitochondrion"/>
    <property type="evidence" value="ECO:0000266"/>
    <property type="project" value="RGD"/>
</dbReference>
<dbReference type="GO" id="GO:0019904">
    <property type="term" value="F:protein domain specific binding"/>
    <property type="evidence" value="ECO:0000266"/>
    <property type="project" value="RGD"/>
</dbReference>
<dbReference type="GO" id="GO:0003735">
    <property type="term" value="F:structural constituent of ribosome"/>
    <property type="evidence" value="ECO:0000318"/>
    <property type="project" value="GO_Central"/>
</dbReference>
<dbReference type="GO" id="GO:0006412">
    <property type="term" value="P:translation"/>
    <property type="evidence" value="ECO:0007669"/>
    <property type="project" value="InterPro"/>
</dbReference>
<dbReference type="FunFam" id="3.90.1030.10:FF:000007">
    <property type="entry name" value="39S ribosomal protein L17, mitochondrial"/>
    <property type="match status" value="1"/>
</dbReference>
<dbReference type="Gene3D" id="3.90.1030.10">
    <property type="entry name" value="Ribosomal protein L17"/>
    <property type="match status" value="1"/>
</dbReference>
<dbReference type="InterPro" id="IPR000456">
    <property type="entry name" value="Ribosomal_bL17"/>
</dbReference>
<dbReference type="InterPro" id="IPR036373">
    <property type="entry name" value="Ribosomal_bL17_sf"/>
</dbReference>
<dbReference type="NCBIfam" id="TIGR00059">
    <property type="entry name" value="L17"/>
    <property type="match status" value="1"/>
</dbReference>
<dbReference type="PANTHER" id="PTHR14413:SF16">
    <property type="entry name" value="LARGE RIBOSOMAL SUBUNIT PROTEIN BL17M"/>
    <property type="match status" value="1"/>
</dbReference>
<dbReference type="PANTHER" id="PTHR14413">
    <property type="entry name" value="RIBOSOMAL PROTEIN L17"/>
    <property type="match status" value="1"/>
</dbReference>
<dbReference type="Pfam" id="PF01196">
    <property type="entry name" value="Ribosomal_L17"/>
    <property type="match status" value="1"/>
</dbReference>
<dbReference type="SUPFAM" id="SSF64263">
    <property type="entry name" value="Prokaryotic ribosomal protein L17"/>
    <property type="match status" value="1"/>
</dbReference>
<accession>Q6PDW6</accession>
<accession>Q9EPG8</accession>
<protein>
    <recommendedName>
        <fullName evidence="3">Large ribosomal subunit protein bL17m</fullName>
    </recommendedName>
    <alternativeName>
        <fullName>39S ribosomal protein L17, mitochondrial</fullName>
        <shortName>L17mt</shortName>
        <shortName>MRP-L17</shortName>
    </alternativeName>
</protein>